<organism>
    <name type="scientific">Nymphaea alba</name>
    <name type="common">White water-lily</name>
    <name type="synonym">Castalia alba</name>
    <dbReference type="NCBI Taxonomy" id="34301"/>
    <lineage>
        <taxon>Eukaryota</taxon>
        <taxon>Viridiplantae</taxon>
        <taxon>Streptophyta</taxon>
        <taxon>Embryophyta</taxon>
        <taxon>Tracheophyta</taxon>
        <taxon>Spermatophyta</taxon>
        <taxon>Magnoliopsida</taxon>
        <taxon>Nymphaeales</taxon>
        <taxon>Nymphaeaceae</taxon>
        <taxon>Nymphaea</taxon>
    </lineage>
</organism>
<evidence type="ECO:0000255" key="1">
    <source>
        <dbReference type="HAMAP-Rule" id="MF_00293"/>
    </source>
</evidence>
<reference key="1">
    <citation type="journal article" date="2004" name="Mol. Biol. Evol.">
        <title>The chloroplast genome of Nymphaea alba: whole-genome analyses and the problem of identifying the most basal angiosperm.</title>
        <authorList>
            <person name="Goremykin V.V."/>
            <person name="Hirsch-Ernst K.I."/>
            <person name="Woelfl S."/>
            <person name="Hellwig F.H."/>
        </authorList>
    </citation>
    <scope>NUCLEOTIDE SEQUENCE [LARGE SCALE GENOMIC DNA]</scope>
</reference>
<comment type="function">
    <text evidence="1">May play a role in photosystem I and II biogenesis.</text>
</comment>
<comment type="subcellular location">
    <subcellularLocation>
        <location evidence="1">Plastid</location>
        <location evidence="1">Chloroplast thylakoid membrane</location>
        <topology evidence="1">Single-pass membrane protein</topology>
    </subcellularLocation>
</comment>
<comment type="similarity">
    <text evidence="1">Belongs to the PsbN family.</text>
</comment>
<comment type="caution">
    <text evidence="1">Originally thought to be a component of PSII; based on experiments in Synechocystis, N.tabacum and barley, and its absence from PSII in T.elongatus and T.vulcanus, this is probably not true.</text>
</comment>
<dbReference type="EMBL" id="AJ627251">
    <property type="protein sequence ID" value="CAF28622.1"/>
    <property type="molecule type" value="Genomic_DNA"/>
</dbReference>
<dbReference type="RefSeq" id="YP_053182.1">
    <property type="nucleotide sequence ID" value="NC_006050.1"/>
</dbReference>
<dbReference type="SMR" id="Q6EW24"/>
<dbReference type="GeneID" id="2896148"/>
<dbReference type="GO" id="GO:0009535">
    <property type="term" value="C:chloroplast thylakoid membrane"/>
    <property type="evidence" value="ECO:0007669"/>
    <property type="project" value="UniProtKB-SubCell"/>
</dbReference>
<dbReference type="GO" id="GO:0015979">
    <property type="term" value="P:photosynthesis"/>
    <property type="evidence" value="ECO:0007669"/>
    <property type="project" value="InterPro"/>
</dbReference>
<dbReference type="HAMAP" id="MF_00293">
    <property type="entry name" value="PSII_PsbN"/>
    <property type="match status" value="1"/>
</dbReference>
<dbReference type="InterPro" id="IPR003398">
    <property type="entry name" value="PSII_PsbN"/>
</dbReference>
<dbReference type="PANTHER" id="PTHR35326">
    <property type="entry name" value="PROTEIN PSBN"/>
    <property type="match status" value="1"/>
</dbReference>
<dbReference type="PANTHER" id="PTHR35326:SF3">
    <property type="entry name" value="PROTEIN PSBN"/>
    <property type="match status" value="1"/>
</dbReference>
<dbReference type="Pfam" id="PF02468">
    <property type="entry name" value="PsbN"/>
    <property type="match status" value="1"/>
</dbReference>
<accession>Q6EW24</accession>
<proteinExistence type="inferred from homology"/>
<keyword id="KW-0150">Chloroplast</keyword>
<keyword id="KW-0472">Membrane</keyword>
<keyword id="KW-0934">Plastid</keyword>
<keyword id="KW-0793">Thylakoid</keyword>
<keyword id="KW-0812">Transmembrane</keyword>
<keyword id="KW-1133">Transmembrane helix</keyword>
<gene>
    <name evidence="1" type="primary">psbN</name>
</gene>
<geneLocation type="chloroplast"/>
<protein>
    <recommendedName>
        <fullName evidence="1">Protein PsbN</fullName>
    </recommendedName>
</protein>
<feature type="chain" id="PRO_0000207929" description="Protein PsbN">
    <location>
        <begin position="1"/>
        <end position="43"/>
    </location>
</feature>
<feature type="transmembrane region" description="Helical" evidence="1">
    <location>
        <begin position="7"/>
        <end position="27"/>
    </location>
</feature>
<name>PSBN_NYMAL</name>
<sequence>METATLVAIFISGLLVSFTGYALYTAFGQPSQQLRDPFEEHGD</sequence>